<sequence length="58" mass="6526">MATVKVTLIKSMTGRIPNHKLCVKGLGLRRIGHTVEVQDTPENRGMINKAYYMLRVEG</sequence>
<gene>
    <name evidence="1" type="primary">rpmD</name>
    <name type="ordered locus">PFL_5564</name>
</gene>
<evidence type="ECO:0000255" key="1">
    <source>
        <dbReference type="HAMAP-Rule" id="MF_01371"/>
    </source>
</evidence>
<evidence type="ECO:0000305" key="2"/>
<accession>Q4K551</accession>
<comment type="subunit">
    <text evidence="1">Part of the 50S ribosomal subunit.</text>
</comment>
<comment type="similarity">
    <text evidence="1">Belongs to the universal ribosomal protein uL30 family.</text>
</comment>
<feature type="chain" id="PRO_0000273827" description="Large ribosomal subunit protein uL30">
    <location>
        <begin position="1"/>
        <end position="58"/>
    </location>
</feature>
<name>RL30_PSEF5</name>
<protein>
    <recommendedName>
        <fullName evidence="1">Large ribosomal subunit protein uL30</fullName>
    </recommendedName>
    <alternativeName>
        <fullName evidence="2">50S ribosomal protein L30</fullName>
    </alternativeName>
</protein>
<proteinExistence type="inferred from homology"/>
<dbReference type="EMBL" id="CP000076">
    <property type="protein sequence ID" value="AAY96272.1"/>
    <property type="molecule type" value="Genomic_DNA"/>
</dbReference>
<dbReference type="RefSeq" id="WP_003176408.1">
    <property type="nucleotide sequence ID" value="NC_004129.6"/>
</dbReference>
<dbReference type="SMR" id="Q4K551"/>
<dbReference type="STRING" id="220664.PFL_5564"/>
<dbReference type="GeneID" id="97919480"/>
<dbReference type="KEGG" id="pfl:PFL_5564"/>
<dbReference type="eggNOG" id="COG1841">
    <property type="taxonomic scope" value="Bacteria"/>
</dbReference>
<dbReference type="HOGENOM" id="CLU_131047_1_4_6"/>
<dbReference type="Proteomes" id="UP000008540">
    <property type="component" value="Chromosome"/>
</dbReference>
<dbReference type="GO" id="GO:0022625">
    <property type="term" value="C:cytosolic large ribosomal subunit"/>
    <property type="evidence" value="ECO:0007669"/>
    <property type="project" value="TreeGrafter"/>
</dbReference>
<dbReference type="GO" id="GO:0003735">
    <property type="term" value="F:structural constituent of ribosome"/>
    <property type="evidence" value="ECO:0007669"/>
    <property type="project" value="InterPro"/>
</dbReference>
<dbReference type="GO" id="GO:0006412">
    <property type="term" value="P:translation"/>
    <property type="evidence" value="ECO:0007669"/>
    <property type="project" value="UniProtKB-UniRule"/>
</dbReference>
<dbReference type="CDD" id="cd01658">
    <property type="entry name" value="Ribosomal_L30"/>
    <property type="match status" value="1"/>
</dbReference>
<dbReference type="FunFam" id="3.30.1390.20:FF:000001">
    <property type="entry name" value="50S ribosomal protein L30"/>
    <property type="match status" value="1"/>
</dbReference>
<dbReference type="Gene3D" id="3.30.1390.20">
    <property type="entry name" value="Ribosomal protein L30, ferredoxin-like fold domain"/>
    <property type="match status" value="1"/>
</dbReference>
<dbReference type="HAMAP" id="MF_01371_B">
    <property type="entry name" value="Ribosomal_uL30_B"/>
    <property type="match status" value="1"/>
</dbReference>
<dbReference type="InterPro" id="IPR036919">
    <property type="entry name" value="Ribo_uL30_ferredoxin-like_sf"/>
</dbReference>
<dbReference type="InterPro" id="IPR005996">
    <property type="entry name" value="Ribosomal_uL30_bac-type"/>
</dbReference>
<dbReference type="InterPro" id="IPR016082">
    <property type="entry name" value="Ribosomal_uL30_ferredoxin-like"/>
</dbReference>
<dbReference type="NCBIfam" id="TIGR01308">
    <property type="entry name" value="rpmD_bact"/>
    <property type="match status" value="1"/>
</dbReference>
<dbReference type="PANTHER" id="PTHR15892:SF2">
    <property type="entry name" value="LARGE RIBOSOMAL SUBUNIT PROTEIN UL30M"/>
    <property type="match status" value="1"/>
</dbReference>
<dbReference type="PANTHER" id="PTHR15892">
    <property type="entry name" value="MITOCHONDRIAL RIBOSOMAL PROTEIN L30"/>
    <property type="match status" value="1"/>
</dbReference>
<dbReference type="Pfam" id="PF00327">
    <property type="entry name" value="Ribosomal_L30"/>
    <property type="match status" value="1"/>
</dbReference>
<dbReference type="PIRSF" id="PIRSF002211">
    <property type="entry name" value="Ribosomal_L30_bac-type"/>
    <property type="match status" value="1"/>
</dbReference>
<dbReference type="SUPFAM" id="SSF55129">
    <property type="entry name" value="Ribosomal protein L30p/L7e"/>
    <property type="match status" value="1"/>
</dbReference>
<reference key="1">
    <citation type="journal article" date="2005" name="Nat. Biotechnol.">
        <title>Complete genome sequence of the plant commensal Pseudomonas fluorescens Pf-5.</title>
        <authorList>
            <person name="Paulsen I.T."/>
            <person name="Press C.M."/>
            <person name="Ravel J."/>
            <person name="Kobayashi D.Y."/>
            <person name="Myers G.S.A."/>
            <person name="Mavrodi D.V."/>
            <person name="DeBoy R.T."/>
            <person name="Seshadri R."/>
            <person name="Ren Q."/>
            <person name="Madupu R."/>
            <person name="Dodson R.J."/>
            <person name="Durkin A.S."/>
            <person name="Brinkac L.M."/>
            <person name="Daugherty S.C."/>
            <person name="Sullivan S.A."/>
            <person name="Rosovitz M.J."/>
            <person name="Gwinn M.L."/>
            <person name="Zhou L."/>
            <person name="Schneider D.J."/>
            <person name="Cartinhour S.W."/>
            <person name="Nelson W.C."/>
            <person name="Weidman J."/>
            <person name="Watkins K."/>
            <person name="Tran K."/>
            <person name="Khouri H."/>
            <person name="Pierson E.A."/>
            <person name="Pierson L.S. III"/>
            <person name="Thomashow L.S."/>
            <person name="Loper J.E."/>
        </authorList>
    </citation>
    <scope>NUCLEOTIDE SEQUENCE [LARGE SCALE GENOMIC DNA]</scope>
    <source>
        <strain>ATCC BAA-477 / NRRL B-23932 / Pf-5</strain>
    </source>
</reference>
<keyword id="KW-0687">Ribonucleoprotein</keyword>
<keyword id="KW-0689">Ribosomal protein</keyword>
<organism>
    <name type="scientific">Pseudomonas fluorescens (strain ATCC BAA-477 / NRRL B-23932 / Pf-5)</name>
    <dbReference type="NCBI Taxonomy" id="220664"/>
    <lineage>
        <taxon>Bacteria</taxon>
        <taxon>Pseudomonadati</taxon>
        <taxon>Pseudomonadota</taxon>
        <taxon>Gammaproteobacteria</taxon>
        <taxon>Pseudomonadales</taxon>
        <taxon>Pseudomonadaceae</taxon>
        <taxon>Pseudomonas</taxon>
    </lineage>
</organism>